<reference key="1">
    <citation type="journal article" date="2006" name="Proc. Natl. Acad. Sci. U.S.A.">
        <title>Comparative genomics of the lactic acid bacteria.</title>
        <authorList>
            <person name="Makarova K.S."/>
            <person name="Slesarev A."/>
            <person name="Wolf Y.I."/>
            <person name="Sorokin A."/>
            <person name="Mirkin B."/>
            <person name="Koonin E.V."/>
            <person name="Pavlov A."/>
            <person name="Pavlova N."/>
            <person name="Karamychev V."/>
            <person name="Polouchine N."/>
            <person name="Shakhova V."/>
            <person name="Grigoriev I."/>
            <person name="Lou Y."/>
            <person name="Rohksar D."/>
            <person name="Lucas S."/>
            <person name="Huang K."/>
            <person name="Goodstein D.M."/>
            <person name="Hawkins T."/>
            <person name="Plengvidhya V."/>
            <person name="Welker D."/>
            <person name="Hughes J."/>
            <person name="Goh Y."/>
            <person name="Benson A."/>
            <person name="Baldwin K."/>
            <person name="Lee J.-H."/>
            <person name="Diaz-Muniz I."/>
            <person name="Dosti B."/>
            <person name="Smeianov V."/>
            <person name="Wechter W."/>
            <person name="Barabote R."/>
            <person name="Lorca G."/>
            <person name="Altermann E."/>
            <person name="Barrangou R."/>
            <person name="Ganesan B."/>
            <person name="Xie Y."/>
            <person name="Rawsthorne H."/>
            <person name="Tamir D."/>
            <person name="Parker C."/>
            <person name="Breidt F."/>
            <person name="Broadbent J.R."/>
            <person name="Hutkins R."/>
            <person name="O'Sullivan D."/>
            <person name="Steele J."/>
            <person name="Unlu G."/>
            <person name="Saier M.H. Jr."/>
            <person name="Klaenhammer T."/>
            <person name="Richardson P."/>
            <person name="Kozyavkin S."/>
            <person name="Weimer B.C."/>
            <person name="Mills D.A."/>
        </authorList>
    </citation>
    <scope>NUCLEOTIDE SEQUENCE [LARGE SCALE GENOMIC DNA]</scope>
    <source>
        <strain>ATCC BAA-491 / LMD-9</strain>
    </source>
</reference>
<evidence type="ECO:0000255" key="1">
    <source>
        <dbReference type="HAMAP-Rule" id="MF_01553"/>
    </source>
</evidence>
<feature type="chain" id="PRO_1000068884" description="DNA-directed RNA polymerase subunit epsilon">
    <location>
        <begin position="1"/>
        <end position="76"/>
    </location>
</feature>
<gene>
    <name evidence="1" type="primary">rpoY</name>
    <name type="ordered locus">STER_1748</name>
</gene>
<sequence>MIYKVFYQETKERSPRREQTKSLYLDIDAETELEGRIQARQIIEKNTAYNIEFIELLSEKALEYEKETGVFEVTEF</sequence>
<comment type="function">
    <text evidence="1">A non-essential component of RNA polymerase (RNAP).</text>
</comment>
<comment type="catalytic activity">
    <reaction evidence="1">
        <text>RNA(n) + a ribonucleoside 5'-triphosphate = RNA(n+1) + diphosphate</text>
        <dbReference type="Rhea" id="RHEA:21248"/>
        <dbReference type="Rhea" id="RHEA-COMP:14527"/>
        <dbReference type="Rhea" id="RHEA-COMP:17342"/>
        <dbReference type="ChEBI" id="CHEBI:33019"/>
        <dbReference type="ChEBI" id="CHEBI:61557"/>
        <dbReference type="ChEBI" id="CHEBI:140395"/>
        <dbReference type="EC" id="2.7.7.6"/>
    </reaction>
</comment>
<comment type="subunit">
    <text evidence="1">RNAP is composed of a core of 2 alpha, a beta and a beta' subunit. The core is associated with a delta subunit, and at least one of epsilon or omega. When a sigma factor is associated with the core the holoenzyme is formed, which can initiate transcription.</text>
</comment>
<comment type="similarity">
    <text evidence="1">Belongs to the RNA polymerase subunit epsilon family.</text>
</comment>
<accession>Q03IT3</accession>
<organism>
    <name type="scientific">Streptococcus thermophilus (strain ATCC BAA-491 / LMD-9)</name>
    <dbReference type="NCBI Taxonomy" id="322159"/>
    <lineage>
        <taxon>Bacteria</taxon>
        <taxon>Bacillati</taxon>
        <taxon>Bacillota</taxon>
        <taxon>Bacilli</taxon>
        <taxon>Lactobacillales</taxon>
        <taxon>Streptococcaceae</taxon>
        <taxon>Streptococcus</taxon>
    </lineage>
</organism>
<dbReference type="EC" id="2.7.7.6" evidence="1"/>
<dbReference type="EMBL" id="CP000419">
    <property type="protein sequence ID" value="ABJ66889.1"/>
    <property type="molecule type" value="Genomic_DNA"/>
</dbReference>
<dbReference type="RefSeq" id="WP_002947111.1">
    <property type="nucleotide sequence ID" value="NZ_CP086001.1"/>
</dbReference>
<dbReference type="SMR" id="Q03IT3"/>
<dbReference type="KEGG" id="ste:STER_1748"/>
<dbReference type="HOGENOM" id="CLU_187518_0_0_9"/>
<dbReference type="GO" id="GO:0000428">
    <property type="term" value="C:DNA-directed RNA polymerase complex"/>
    <property type="evidence" value="ECO:0007669"/>
    <property type="project" value="UniProtKB-KW"/>
</dbReference>
<dbReference type="GO" id="GO:0003677">
    <property type="term" value="F:DNA binding"/>
    <property type="evidence" value="ECO:0007669"/>
    <property type="project" value="UniProtKB-UniRule"/>
</dbReference>
<dbReference type="GO" id="GO:0003899">
    <property type="term" value="F:DNA-directed RNA polymerase activity"/>
    <property type="evidence" value="ECO:0007669"/>
    <property type="project" value="UniProtKB-UniRule"/>
</dbReference>
<dbReference type="GO" id="GO:0006351">
    <property type="term" value="P:DNA-templated transcription"/>
    <property type="evidence" value="ECO:0007669"/>
    <property type="project" value="UniProtKB-UniRule"/>
</dbReference>
<dbReference type="Gene3D" id="3.10.20.730">
    <property type="entry name" value="RNAP, epsilon subunit-like"/>
    <property type="match status" value="1"/>
</dbReference>
<dbReference type="HAMAP" id="MF_01553">
    <property type="entry name" value="RNApol_bact_RpoY"/>
    <property type="match status" value="1"/>
</dbReference>
<dbReference type="InterPro" id="IPR009907">
    <property type="entry name" value="RpoY"/>
</dbReference>
<dbReference type="NCBIfam" id="NF010188">
    <property type="entry name" value="PRK13667.1"/>
    <property type="match status" value="1"/>
</dbReference>
<dbReference type="Pfam" id="PF07288">
    <property type="entry name" value="RpoY"/>
    <property type="match status" value="1"/>
</dbReference>
<protein>
    <recommendedName>
        <fullName evidence="1">DNA-directed RNA polymerase subunit epsilon</fullName>
        <shortName evidence="1">RNAP epsilon subunit</shortName>
        <ecNumber evidence="1">2.7.7.6</ecNumber>
    </recommendedName>
    <alternativeName>
        <fullName evidence="1">RNA polymerase epsilon subunit</fullName>
    </alternativeName>
    <alternativeName>
        <fullName evidence="1">Transcriptase subunit epsilon</fullName>
    </alternativeName>
</protein>
<name>RPOY_STRTD</name>
<proteinExistence type="inferred from homology"/>
<keyword id="KW-0240">DNA-directed RNA polymerase</keyword>
<keyword id="KW-0548">Nucleotidyltransferase</keyword>
<keyword id="KW-0804">Transcription</keyword>
<keyword id="KW-0808">Transferase</keyword>